<sequence>MDKKTSRLRRAIRARKKIQELGVNRLVVHRTPRHIYAQVINPEAQVVAAASTVEKAVKEQLKSTGNVDAAKAVGKFIAERAIEKGVTTVAFDRSGFKYHGRVAALADAAREAGLQF</sequence>
<dbReference type="EMBL" id="CP000469">
    <property type="protein sequence ID" value="ABK46459.1"/>
    <property type="molecule type" value="Genomic_DNA"/>
</dbReference>
<dbReference type="RefSeq" id="WP_011715467.1">
    <property type="nucleotide sequence ID" value="NC_008577.1"/>
</dbReference>
<dbReference type="SMR" id="A0KRP0"/>
<dbReference type="STRING" id="94122.Shewana3_0215"/>
<dbReference type="GeneID" id="94726202"/>
<dbReference type="KEGG" id="shn:Shewana3_0215"/>
<dbReference type="eggNOG" id="COG0256">
    <property type="taxonomic scope" value="Bacteria"/>
</dbReference>
<dbReference type="HOGENOM" id="CLU_098841_0_1_6"/>
<dbReference type="OrthoDB" id="9810939at2"/>
<dbReference type="Proteomes" id="UP000002589">
    <property type="component" value="Chromosome"/>
</dbReference>
<dbReference type="GO" id="GO:0022625">
    <property type="term" value="C:cytosolic large ribosomal subunit"/>
    <property type="evidence" value="ECO:0007669"/>
    <property type="project" value="TreeGrafter"/>
</dbReference>
<dbReference type="GO" id="GO:0008097">
    <property type="term" value="F:5S rRNA binding"/>
    <property type="evidence" value="ECO:0007669"/>
    <property type="project" value="TreeGrafter"/>
</dbReference>
<dbReference type="GO" id="GO:0003735">
    <property type="term" value="F:structural constituent of ribosome"/>
    <property type="evidence" value="ECO:0007669"/>
    <property type="project" value="InterPro"/>
</dbReference>
<dbReference type="GO" id="GO:0006412">
    <property type="term" value="P:translation"/>
    <property type="evidence" value="ECO:0007669"/>
    <property type="project" value="UniProtKB-UniRule"/>
</dbReference>
<dbReference type="CDD" id="cd00432">
    <property type="entry name" value="Ribosomal_L18_L5e"/>
    <property type="match status" value="1"/>
</dbReference>
<dbReference type="FunFam" id="3.30.420.100:FF:000001">
    <property type="entry name" value="50S ribosomal protein L18"/>
    <property type="match status" value="1"/>
</dbReference>
<dbReference type="Gene3D" id="3.30.420.100">
    <property type="match status" value="1"/>
</dbReference>
<dbReference type="HAMAP" id="MF_01337_B">
    <property type="entry name" value="Ribosomal_uL18_B"/>
    <property type="match status" value="1"/>
</dbReference>
<dbReference type="InterPro" id="IPR004389">
    <property type="entry name" value="Ribosomal_uL18_bac-type"/>
</dbReference>
<dbReference type="InterPro" id="IPR005484">
    <property type="entry name" value="Ribosomal_uL18_bac/euk"/>
</dbReference>
<dbReference type="NCBIfam" id="TIGR00060">
    <property type="entry name" value="L18_bact"/>
    <property type="match status" value="1"/>
</dbReference>
<dbReference type="PANTHER" id="PTHR12899">
    <property type="entry name" value="39S RIBOSOMAL PROTEIN L18, MITOCHONDRIAL"/>
    <property type="match status" value="1"/>
</dbReference>
<dbReference type="PANTHER" id="PTHR12899:SF3">
    <property type="entry name" value="LARGE RIBOSOMAL SUBUNIT PROTEIN UL18M"/>
    <property type="match status" value="1"/>
</dbReference>
<dbReference type="Pfam" id="PF00861">
    <property type="entry name" value="Ribosomal_L18p"/>
    <property type="match status" value="1"/>
</dbReference>
<dbReference type="SUPFAM" id="SSF53137">
    <property type="entry name" value="Translational machinery components"/>
    <property type="match status" value="1"/>
</dbReference>
<gene>
    <name evidence="1" type="primary">rplR</name>
    <name type="ordered locus">Shewana3_0215</name>
</gene>
<organism>
    <name type="scientific">Shewanella sp. (strain ANA-3)</name>
    <dbReference type="NCBI Taxonomy" id="94122"/>
    <lineage>
        <taxon>Bacteria</taxon>
        <taxon>Pseudomonadati</taxon>
        <taxon>Pseudomonadota</taxon>
        <taxon>Gammaproteobacteria</taxon>
        <taxon>Alteromonadales</taxon>
        <taxon>Shewanellaceae</taxon>
        <taxon>Shewanella</taxon>
    </lineage>
</organism>
<evidence type="ECO:0000255" key="1">
    <source>
        <dbReference type="HAMAP-Rule" id="MF_01337"/>
    </source>
</evidence>
<evidence type="ECO:0000305" key="2"/>
<name>RL18_SHESA</name>
<protein>
    <recommendedName>
        <fullName evidence="1">Large ribosomal subunit protein uL18</fullName>
    </recommendedName>
    <alternativeName>
        <fullName evidence="2">50S ribosomal protein L18</fullName>
    </alternativeName>
</protein>
<comment type="function">
    <text evidence="1">This is one of the proteins that bind and probably mediate the attachment of the 5S RNA into the large ribosomal subunit, where it forms part of the central protuberance.</text>
</comment>
<comment type="subunit">
    <text evidence="1">Part of the 50S ribosomal subunit; part of the 5S rRNA/L5/L18/L25 subcomplex. Contacts the 5S and 23S rRNAs.</text>
</comment>
<comment type="similarity">
    <text evidence="1">Belongs to the universal ribosomal protein uL18 family.</text>
</comment>
<accession>A0KRP0</accession>
<reference key="1">
    <citation type="submission" date="2006-09" db="EMBL/GenBank/DDBJ databases">
        <title>Complete sequence of chromosome 1 of Shewanella sp. ANA-3.</title>
        <authorList>
            <person name="Copeland A."/>
            <person name="Lucas S."/>
            <person name="Lapidus A."/>
            <person name="Barry K."/>
            <person name="Detter J.C."/>
            <person name="Glavina del Rio T."/>
            <person name="Hammon N."/>
            <person name="Israni S."/>
            <person name="Dalin E."/>
            <person name="Tice H."/>
            <person name="Pitluck S."/>
            <person name="Chertkov O."/>
            <person name="Brettin T."/>
            <person name="Bruce D."/>
            <person name="Han C."/>
            <person name="Tapia R."/>
            <person name="Gilna P."/>
            <person name="Schmutz J."/>
            <person name="Larimer F."/>
            <person name="Land M."/>
            <person name="Hauser L."/>
            <person name="Kyrpides N."/>
            <person name="Kim E."/>
            <person name="Newman D."/>
            <person name="Salticov C."/>
            <person name="Konstantinidis K."/>
            <person name="Klappenback J."/>
            <person name="Tiedje J."/>
            <person name="Richardson P."/>
        </authorList>
    </citation>
    <scope>NUCLEOTIDE SEQUENCE [LARGE SCALE GENOMIC DNA]</scope>
    <source>
        <strain>ANA-3</strain>
    </source>
</reference>
<feature type="chain" id="PRO_1000053110" description="Large ribosomal subunit protein uL18">
    <location>
        <begin position="1"/>
        <end position="116"/>
    </location>
</feature>
<proteinExistence type="inferred from homology"/>
<keyword id="KW-0687">Ribonucleoprotein</keyword>
<keyword id="KW-0689">Ribosomal protein</keyword>
<keyword id="KW-0694">RNA-binding</keyword>
<keyword id="KW-0699">rRNA-binding</keyword>